<gene>
    <name evidence="1" type="primary">argB</name>
    <name type="ordered locus">BURPS668_0185</name>
</gene>
<dbReference type="EC" id="2.7.2.8" evidence="1"/>
<dbReference type="EMBL" id="CP000570">
    <property type="protein sequence ID" value="ABN85288.1"/>
    <property type="status" value="ALT_INIT"/>
    <property type="molecule type" value="Genomic_DNA"/>
</dbReference>
<dbReference type="RefSeq" id="WP_004200214.1">
    <property type="nucleotide sequence ID" value="NC_009074.1"/>
</dbReference>
<dbReference type="SMR" id="A3N4G7"/>
<dbReference type="GeneID" id="93058708"/>
<dbReference type="KEGG" id="bpd:BURPS668_0185"/>
<dbReference type="HOGENOM" id="CLU_053680_0_0_4"/>
<dbReference type="UniPathway" id="UPA00068">
    <property type="reaction ID" value="UER00107"/>
</dbReference>
<dbReference type="GO" id="GO:0005737">
    <property type="term" value="C:cytoplasm"/>
    <property type="evidence" value="ECO:0007669"/>
    <property type="project" value="UniProtKB-SubCell"/>
</dbReference>
<dbReference type="GO" id="GO:0003991">
    <property type="term" value="F:acetylglutamate kinase activity"/>
    <property type="evidence" value="ECO:0007669"/>
    <property type="project" value="UniProtKB-UniRule"/>
</dbReference>
<dbReference type="GO" id="GO:0005524">
    <property type="term" value="F:ATP binding"/>
    <property type="evidence" value="ECO:0007669"/>
    <property type="project" value="UniProtKB-UniRule"/>
</dbReference>
<dbReference type="GO" id="GO:0042450">
    <property type="term" value="P:arginine biosynthetic process via ornithine"/>
    <property type="evidence" value="ECO:0007669"/>
    <property type="project" value="UniProtKB-UniRule"/>
</dbReference>
<dbReference type="GO" id="GO:0006526">
    <property type="term" value="P:L-arginine biosynthetic process"/>
    <property type="evidence" value="ECO:0007669"/>
    <property type="project" value="UniProtKB-UniPathway"/>
</dbReference>
<dbReference type="CDD" id="cd04250">
    <property type="entry name" value="AAK_NAGK-C"/>
    <property type="match status" value="1"/>
</dbReference>
<dbReference type="FunFam" id="3.40.1160.10:FF:000004">
    <property type="entry name" value="Acetylglutamate kinase"/>
    <property type="match status" value="1"/>
</dbReference>
<dbReference type="Gene3D" id="3.40.1160.10">
    <property type="entry name" value="Acetylglutamate kinase-like"/>
    <property type="match status" value="1"/>
</dbReference>
<dbReference type="HAMAP" id="MF_00082">
    <property type="entry name" value="ArgB"/>
    <property type="match status" value="1"/>
</dbReference>
<dbReference type="InterPro" id="IPR036393">
    <property type="entry name" value="AceGlu_kinase-like_sf"/>
</dbReference>
<dbReference type="InterPro" id="IPR004662">
    <property type="entry name" value="AcgluKinase_fam"/>
</dbReference>
<dbReference type="InterPro" id="IPR037528">
    <property type="entry name" value="ArgB"/>
</dbReference>
<dbReference type="InterPro" id="IPR001048">
    <property type="entry name" value="Asp/Glu/Uridylate_kinase"/>
</dbReference>
<dbReference type="InterPro" id="IPR041727">
    <property type="entry name" value="NAGK-C"/>
</dbReference>
<dbReference type="NCBIfam" id="TIGR00761">
    <property type="entry name" value="argB"/>
    <property type="match status" value="1"/>
</dbReference>
<dbReference type="PANTHER" id="PTHR23342">
    <property type="entry name" value="N-ACETYLGLUTAMATE SYNTHASE"/>
    <property type="match status" value="1"/>
</dbReference>
<dbReference type="PANTHER" id="PTHR23342:SF0">
    <property type="entry name" value="N-ACETYLGLUTAMATE SYNTHASE, MITOCHONDRIAL"/>
    <property type="match status" value="1"/>
</dbReference>
<dbReference type="Pfam" id="PF00696">
    <property type="entry name" value="AA_kinase"/>
    <property type="match status" value="1"/>
</dbReference>
<dbReference type="PIRSF" id="PIRSF000728">
    <property type="entry name" value="NAGK"/>
    <property type="match status" value="1"/>
</dbReference>
<dbReference type="SUPFAM" id="SSF53633">
    <property type="entry name" value="Carbamate kinase-like"/>
    <property type="match status" value="1"/>
</dbReference>
<sequence length="299" mass="32119">MSEPIDLSQISPALKAEILAEALPYIRRYHGKTVVIKYGGNAMTEERLKQGFARDVILLKLVGINPVIVHGGGPQIDQALKKIGKQGTFIQGMRVTDEETMEVVEWVLGGEVQQDIVTLINHFGGHAVGLTGKDGGLIHARKLMMPDRDNPGEYVDIGQVGEVEAINPAVVKALQDDAFIPVISPIGFGEDGLSYNINADLVAGKLATVLNAEKLVMMTNIPGVMDKEGNLLTDLSAREIDALFEDGTISGGMLPKISSALDAAKSGVKSVHIVDGRIEHSVLLEILTEQPFGTMIRSH</sequence>
<name>ARGB_BURP6</name>
<organism>
    <name type="scientific">Burkholderia pseudomallei (strain 668)</name>
    <dbReference type="NCBI Taxonomy" id="320373"/>
    <lineage>
        <taxon>Bacteria</taxon>
        <taxon>Pseudomonadati</taxon>
        <taxon>Pseudomonadota</taxon>
        <taxon>Betaproteobacteria</taxon>
        <taxon>Burkholderiales</taxon>
        <taxon>Burkholderiaceae</taxon>
        <taxon>Burkholderia</taxon>
        <taxon>pseudomallei group</taxon>
    </lineage>
</organism>
<keyword id="KW-0028">Amino-acid biosynthesis</keyword>
<keyword id="KW-0055">Arginine biosynthesis</keyword>
<keyword id="KW-0067">ATP-binding</keyword>
<keyword id="KW-0963">Cytoplasm</keyword>
<keyword id="KW-0418">Kinase</keyword>
<keyword id="KW-0547">Nucleotide-binding</keyword>
<keyword id="KW-0808">Transferase</keyword>
<reference key="1">
    <citation type="journal article" date="2010" name="Genome Biol. Evol.">
        <title>Continuing evolution of Burkholderia mallei through genome reduction and large-scale rearrangements.</title>
        <authorList>
            <person name="Losada L."/>
            <person name="Ronning C.M."/>
            <person name="DeShazer D."/>
            <person name="Woods D."/>
            <person name="Fedorova N."/>
            <person name="Kim H.S."/>
            <person name="Shabalina S.A."/>
            <person name="Pearson T.R."/>
            <person name="Brinkac L."/>
            <person name="Tan P."/>
            <person name="Nandi T."/>
            <person name="Crabtree J."/>
            <person name="Badger J."/>
            <person name="Beckstrom-Sternberg S."/>
            <person name="Saqib M."/>
            <person name="Schutzer S.E."/>
            <person name="Keim P."/>
            <person name="Nierman W.C."/>
        </authorList>
    </citation>
    <scope>NUCLEOTIDE SEQUENCE [LARGE SCALE GENOMIC DNA]</scope>
    <source>
        <strain>668</strain>
    </source>
</reference>
<proteinExistence type="inferred from homology"/>
<protein>
    <recommendedName>
        <fullName evidence="1">Acetylglutamate kinase</fullName>
        <ecNumber evidence="1">2.7.2.8</ecNumber>
    </recommendedName>
    <alternativeName>
        <fullName evidence="1">N-acetyl-L-glutamate 5-phosphotransferase</fullName>
    </alternativeName>
    <alternativeName>
        <fullName evidence="1">NAG kinase</fullName>
        <shortName evidence="1">NAGK</shortName>
    </alternativeName>
</protein>
<accession>A3N4G7</accession>
<feature type="chain" id="PRO_0000335615" description="Acetylglutamate kinase">
    <location>
        <begin position="1"/>
        <end position="299"/>
    </location>
</feature>
<feature type="binding site" evidence="1">
    <location>
        <begin position="72"/>
        <end position="73"/>
    </location>
    <ligand>
        <name>substrate</name>
    </ligand>
</feature>
<feature type="binding site" evidence="1">
    <location>
        <position position="94"/>
    </location>
    <ligand>
        <name>substrate</name>
    </ligand>
</feature>
<feature type="binding site" evidence="1">
    <location>
        <position position="196"/>
    </location>
    <ligand>
        <name>substrate</name>
    </ligand>
</feature>
<feature type="site" description="Transition state stabilizer" evidence="1">
    <location>
        <position position="37"/>
    </location>
</feature>
<feature type="site" description="Transition state stabilizer" evidence="1">
    <location>
        <position position="256"/>
    </location>
</feature>
<evidence type="ECO:0000255" key="1">
    <source>
        <dbReference type="HAMAP-Rule" id="MF_00082"/>
    </source>
</evidence>
<evidence type="ECO:0000305" key="2"/>
<comment type="function">
    <text evidence="1">Catalyzes the ATP-dependent phosphorylation of N-acetyl-L-glutamate.</text>
</comment>
<comment type="catalytic activity">
    <reaction evidence="1">
        <text>N-acetyl-L-glutamate + ATP = N-acetyl-L-glutamyl 5-phosphate + ADP</text>
        <dbReference type="Rhea" id="RHEA:14629"/>
        <dbReference type="ChEBI" id="CHEBI:30616"/>
        <dbReference type="ChEBI" id="CHEBI:44337"/>
        <dbReference type="ChEBI" id="CHEBI:57936"/>
        <dbReference type="ChEBI" id="CHEBI:456216"/>
        <dbReference type="EC" id="2.7.2.8"/>
    </reaction>
</comment>
<comment type="pathway">
    <text evidence="1">Amino-acid biosynthesis; L-arginine biosynthesis; N(2)-acetyl-L-ornithine from L-glutamate: step 2/4.</text>
</comment>
<comment type="subcellular location">
    <subcellularLocation>
        <location evidence="1">Cytoplasm</location>
    </subcellularLocation>
</comment>
<comment type="similarity">
    <text evidence="1">Belongs to the acetylglutamate kinase family. ArgB subfamily.</text>
</comment>
<comment type="sequence caution" evidence="2">
    <conflict type="erroneous initiation">
        <sequence resource="EMBL-CDS" id="ABN85288"/>
    </conflict>
</comment>